<name>RL16_RICTY</name>
<comment type="function">
    <text evidence="1">Binds 23S rRNA and is also seen to make contacts with the A and possibly P site tRNAs.</text>
</comment>
<comment type="subunit">
    <text evidence="1">Part of the 50S ribosomal subunit.</text>
</comment>
<comment type="similarity">
    <text evidence="1">Belongs to the universal ribosomal protein uL16 family.</text>
</comment>
<reference key="1">
    <citation type="journal article" date="2004" name="J. Bacteriol.">
        <title>Complete genome sequence of Rickettsia typhi and comparison with sequences of other Rickettsiae.</title>
        <authorList>
            <person name="McLeod M.P."/>
            <person name="Qin X."/>
            <person name="Karpathy S.E."/>
            <person name="Gioia J."/>
            <person name="Highlander S.K."/>
            <person name="Fox G.E."/>
            <person name="McNeill T.Z."/>
            <person name="Jiang H."/>
            <person name="Muzny D."/>
            <person name="Jacob L.S."/>
            <person name="Hawes A.C."/>
            <person name="Sodergren E."/>
            <person name="Gill R."/>
            <person name="Hume J."/>
            <person name="Morgan M."/>
            <person name="Fan G."/>
            <person name="Amin A.G."/>
            <person name="Gibbs R.A."/>
            <person name="Hong C."/>
            <person name="Yu X.-J."/>
            <person name="Walker D.H."/>
            <person name="Weinstock G.M."/>
        </authorList>
    </citation>
    <scope>NUCLEOTIDE SEQUENCE [LARGE SCALE GENOMIC DNA]</scope>
    <source>
        <strain>ATCC VR-144 / Wilmington</strain>
    </source>
</reference>
<organism>
    <name type="scientific">Rickettsia typhi (strain ATCC VR-144 / Wilmington)</name>
    <dbReference type="NCBI Taxonomy" id="257363"/>
    <lineage>
        <taxon>Bacteria</taxon>
        <taxon>Pseudomonadati</taxon>
        <taxon>Pseudomonadota</taxon>
        <taxon>Alphaproteobacteria</taxon>
        <taxon>Rickettsiales</taxon>
        <taxon>Rickettsiaceae</taxon>
        <taxon>Rickettsieae</taxon>
        <taxon>Rickettsia</taxon>
        <taxon>typhus group</taxon>
    </lineage>
</organism>
<sequence length="136" mass="15310">MLAPKKQKFRKAHKGRVMSKAKAGMTLAFGSFGLKSIDGWRVTARQIEAGRKAATRCMKRQGRLWIRIFPDVPVSKKPAEVRMGKGKGAPEFFAVRVSPGRIMFEIEGVEENIALRALELASAKLPVRTRIVRRYE</sequence>
<gene>
    <name evidence="1" type="primary">rplP</name>
    <name type="ordered locus">RT0644</name>
</gene>
<evidence type="ECO:0000255" key="1">
    <source>
        <dbReference type="HAMAP-Rule" id="MF_01342"/>
    </source>
</evidence>
<evidence type="ECO:0000305" key="2"/>
<protein>
    <recommendedName>
        <fullName evidence="1">Large ribosomal subunit protein uL16</fullName>
    </recommendedName>
    <alternativeName>
        <fullName evidence="2">50S ribosomal protein L16</fullName>
    </alternativeName>
</protein>
<keyword id="KW-0687">Ribonucleoprotein</keyword>
<keyword id="KW-0689">Ribosomal protein</keyword>
<keyword id="KW-0694">RNA-binding</keyword>
<keyword id="KW-0699">rRNA-binding</keyword>
<keyword id="KW-0820">tRNA-binding</keyword>
<accession>Q68W85</accession>
<dbReference type="EMBL" id="AE017197">
    <property type="protein sequence ID" value="AAU04107.1"/>
    <property type="molecule type" value="Genomic_DNA"/>
</dbReference>
<dbReference type="RefSeq" id="WP_011191084.1">
    <property type="nucleotide sequence ID" value="NC_006142.1"/>
</dbReference>
<dbReference type="SMR" id="Q68W85"/>
<dbReference type="KEGG" id="rty:RT0644"/>
<dbReference type="eggNOG" id="COG0197">
    <property type="taxonomic scope" value="Bacteria"/>
</dbReference>
<dbReference type="HOGENOM" id="CLU_078858_2_1_5"/>
<dbReference type="OrthoDB" id="9802589at2"/>
<dbReference type="Proteomes" id="UP000000604">
    <property type="component" value="Chromosome"/>
</dbReference>
<dbReference type="GO" id="GO:0022625">
    <property type="term" value="C:cytosolic large ribosomal subunit"/>
    <property type="evidence" value="ECO:0007669"/>
    <property type="project" value="TreeGrafter"/>
</dbReference>
<dbReference type="GO" id="GO:0019843">
    <property type="term" value="F:rRNA binding"/>
    <property type="evidence" value="ECO:0007669"/>
    <property type="project" value="UniProtKB-UniRule"/>
</dbReference>
<dbReference type="GO" id="GO:0003735">
    <property type="term" value="F:structural constituent of ribosome"/>
    <property type="evidence" value="ECO:0007669"/>
    <property type="project" value="InterPro"/>
</dbReference>
<dbReference type="GO" id="GO:0000049">
    <property type="term" value="F:tRNA binding"/>
    <property type="evidence" value="ECO:0007669"/>
    <property type="project" value="UniProtKB-KW"/>
</dbReference>
<dbReference type="GO" id="GO:0006412">
    <property type="term" value="P:translation"/>
    <property type="evidence" value="ECO:0007669"/>
    <property type="project" value="UniProtKB-UniRule"/>
</dbReference>
<dbReference type="CDD" id="cd01433">
    <property type="entry name" value="Ribosomal_L16_L10e"/>
    <property type="match status" value="1"/>
</dbReference>
<dbReference type="FunFam" id="3.90.1170.10:FF:000001">
    <property type="entry name" value="50S ribosomal protein L16"/>
    <property type="match status" value="1"/>
</dbReference>
<dbReference type="Gene3D" id="3.90.1170.10">
    <property type="entry name" value="Ribosomal protein L10e/L16"/>
    <property type="match status" value="1"/>
</dbReference>
<dbReference type="HAMAP" id="MF_01342">
    <property type="entry name" value="Ribosomal_uL16"/>
    <property type="match status" value="1"/>
</dbReference>
<dbReference type="InterPro" id="IPR047873">
    <property type="entry name" value="Ribosomal_uL16"/>
</dbReference>
<dbReference type="InterPro" id="IPR000114">
    <property type="entry name" value="Ribosomal_uL16_bact-type"/>
</dbReference>
<dbReference type="InterPro" id="IPR020798">
    <property type="entry name" value="Ribosomal_uL16_CS"/>
</dbReference>
<dbReference type="InterPro" id="IPR016180">
    <property type="entry name" value="Ribosomal_uL16_dom"/>
</dbReference>
<dbReference type="InterPro" id="IPR036920">
    <property type="entry name" value="Ribosomal_uL16_sf"/>
</dbReference>
<dbReference type="NCBIfam" id="TIGR01164">
    <property type="entry name" value="rplP_bact"/>
    <property type="match status" value="1"/>
</dbReference>
<dbReference type="PANTHER" id="PTHR12220">
    <property type="entry name" value="50S/60S RIBOSOMAL PROTEIN L16"/>
    <property type="match status" value="1"/>
</dbReference>
<dbReference type="PANTHER" id="PTHR12220:SF13">
    <property type="entry name" value="LARGE RIBOSOMAL SUBUNIT PROTEIN UL16M"/>
    <property type="match status" value="1"/>
</dbReference>
<dbReference type="Pfam" id="PF00252">
    <property type="entry name" value="Ribosomal_L16"/>
    <property type="match status" value="1"/>
</dbReference>
<dbReference type="PRINTS" id="PR00060">
    <property type="entry name" value="RIBOSOMALL16"/>
</dbReference>
<dbReference type="SUPFAM" id="SSF54686">
    <property type="entry name" value="Ribosomal protein L16p/L10e"/>
    <property type="match status" value="1"/>
</dbReference>
<dbReference type="PROSITE" id="PS00586">
    <property type="entry name" value="RIBOSOMAL_L16_1"/>
    <property type="match status" value="1"/>
</dbReference>
<dbReference type="PROSITE" id="PS00701">
    <property type="entry name" value="RIBOSOMAL_L16_2"/>
    <property type="match status" value="1"/>
</dbReference>
<proteinExistence type="inferred from homology"/>
<feature type="chain" id="PRO_0000062190" description="Large ribosomal subunit protein uL16">
    <location>
        <begin position="1"/>
        <end position="136"/>
    </location>
</feature>